<proteinExistence type="predicted"/>
<name>FB295_ARATH</name>
<protein>
    <recommendedName>
        <fullName>Putative F-box protein At5g60060</fullName>
    </recommendedName>
</protein>
<organism>
    <name type="scientific">Arabidopsis thaliana</name>
    <name type="common">Mouse-ear cress</name>
    <dbReference type="NCBI Taxonomy" id="3702"/>
    <lineage>
        <taxon>Eukaryota</taxon>
        <taxon>Viridiplantae</taxon>
        <taxon>Streptophyta</taxon>
        <taxon>Embryophyta</taxon>
        <taxon>Tracheophyta</taxon>
        <taxon>Spermatophyta</taxon>
        <taxon>Magnoliopsida</taxon>
        <taxon>eudicotyledons</taxon>
        <taxon>Gunneridae</taxon>
        <taxon>Pentapetalae</taxon>
        <taxon>rosids</taxon>
        <taxon>malvids</taxon>
        <taxon>Brassicales</taxon>
        <taxon>Brassicaceae</taxon>
        <taxon>Camelineae</taxon>
        <taxon>Arabidopsis</taxon>
    </lineage>
</organism>
<sequence>MDSSSLLPSQWSDLPLDILELISDRLDHDSSDTIHLLCLRSVCATWRLSLPLSNKNNRLSKFPKYLPFWSSSSSSSGFFTLKQSNVYKLEAPLNPRTCLVKLQETTPGIMRVLDLFSNDRICFLPENFPSKIDLQEFHVRLVRRTYRMEYANNGGGAVPCFWSLHSDKVVILSSGEDSAIIAIHSGGKLGFLKSGNDEKWKILDNSWNVIYEDIMLYKDNRCIVVDDKGKTVIYDVDFKVSDLAEGLVGGGGHKKHLVECSGGEVFLVDKYVKTVWCKSDISKSVVEFRVYNLKREEKRWEEVRDLGDVALFIGDDCSFSVQNPAGDLAGGFIFYSDYRNGGRSRGICSDGDGVFNVDMQGDFVFSIKPNYFGP</sequence>
<gene>
    <name type="ordered locus">At5g60060</name>
    <name type="ORF">MGO3.4</name>
</gene>
<keyword id="KW-1185">Reference proteome</keyword>
<accession>Q9LVG8</accession>
<dbReference type="EMBL" id="AB019231">
    <property type="protein sequence ID" value="BAA96935.1"/>
    <property type="molecule type" value="Genomic_DNA"/>
</dbReference>
<dbReference type="EMBL" id="CP002688">
    <property type="protein sequence ID" value="AED97272.1"/>
    <property type="molecule type" value="Genomic_DNA"/>
</dbReference>
<dbReference type="RefSeq" id="NP_200814.1">
    <property type="nucleotide sequence ID" value="NM_125399.2"/>
</dbReference>
<dbReference type="FunCoup" id="Q9LVG8">
    <property type="interactions" value="4"/>
</dbReference>
<dbReference type="PaxDb" id="3702-AT5G60060.1"/>
<dbReference type="EnsemblPlants" id="AT5G60060.1">
    <property type="protein sequence ID" value="AT5G60060.1"/>
    <property type="gene ID" value="AT5G60060"/>
</dbReference>
<dbReference type="GeneID" id="836128"/>
<dbReference type="Gramene" id="AT5G60060.1">
    <property type="protein sequence ID" value="AT5G60060.1"/>
    <property type="gene ID" value="AT5G60060"/>
</dbReference>
<dbReference type="KEGG" id="ath:AT5G60060"/>
<dbReference type="Araport" id="AT5G60060"/>
<dbReference type="TAIR" id="AT5G60060">
    <property type="gene designation" value="ATFDA20"/>
</dbReference>
<dbReference type="eggNOG" id="ENOG502QW71">
    <property type="taxonomic scope" value="Eukaryota"/>
</dbReference>
<dbReference type="HOGENOM" id="CLU_019286_1_0_1"/>
<dbReference type="InParanoid" id="Q9LVG8"/>
<dbReference type="OMA" id="WKILDNS"/>
<dbReference type="OrthoDB" id="638130at2759"/>
<dbReference type="PhylomeDB" id="Q9LVG8"/>
<dbReference type="PRO" id="PR:Q9LVG8"/>
<dbReference type="Proteomes" id="UP000006548">
    <property type="component" value="Chromosome 5"/>
</dbReference>
<dbReference type="ExpressionAtlas" id="Q9LVG8">
    <property type="expression patterns" value="baseline and differential"/>
</dbReference>
<dbReference type="InterPro" id="IPR005174">
    <property type="entry name" value="KIB1-4_b-propeller"/>
</dbReference>
<dbReference type="InterPro" id="IPR051304">
    <property type="entry name" value="SCF_F-box_domain"/>
</dbReference>
<dbReference type="PANTHER" id="PTHR47123:SF26">
    <property type="entry name" value="DUF295 DOMAIN-CONTAINING PROTEIN"/>
    <property type="match status" value="1"/>
</dbReference>
<dbReference type="PANTHER" id="PTHR47123">
    <property type="entry name" value="F-BOX PROTEIN SKIP23"/>
    <property type="match status" value="1"/>
</dbReference>
<dbReference type="Pfam" id="PF03478">
    <property type="entry name" value="Beta-prop_KIB1-4"/>
    <property type="match status" value="1"/>
</dbReference>
<feature type="chain" id="PRO_0000283561" description="Putative F-box protein At5g60060">
    <location>
        <begin position="1"/>
        <end position="374"/>
    </location>
</feature>
<feature type="domain" description="F-box">
    <location>
        <begin position="9"/>
        <end position="61"/>
    </location>
</feature>
<reference key="1">
    <citation type="journal article" date="2000" name="DNA Res.">
        <title>Structural analysis of Arabidopsis thaliana chromosome 5. X. Sequence features of the regions of 3,076,755 bp covered by sixty P1 and TAC clones.</title>
        <authorList>
            <person name="Sato S."/>
            <person name="Nakamura Y."/>
            <person name="Kaneko T."/>
            <person name="Katoh T."/>
            <person name="Asamizu E."/>
            <person name="Kotani H."/>
            <person name="Tabata S."/>
        </authorList>
    </citation>
    <scope>NUCLEOTIDE SEQUENCE [LARGE SCALE GENOMIC DNA]</scope>
    <source>
        <strain>cv. Columbia</strain>
    </source>
</reference>
<reference key="2">
    <citation type="journal article" date="2017" name="Plant J.">
        <title>Araport11: a complete reannotation of the Arabidopsis thaliana reference genome.</title>
        <authorList>
            <person name="Cheng C.Y."/>
            <person name="Krishnakumar V."/>
            <person name="Chan A.P."/>
            <person name="Thibaud-Nissen F."/>
            <person name="Schobel S."/>
            <person name="Town C.D."/>
        </authorList>
    </citation>
    <scope>GENOME REANNOTATION</scope>
    <source>
        <strain>cv. Columbia</strain>
    </source>
</reference>